<proteinExistence type="inferred from homology"/>
<gene>
    <name evidence="2" type="primary">psbD</name>
</gene>
<organism>
    <name type="scientific">Aethionema grandiflorum</name>
    <name type="common">Persian stone-cress</name>
    <dbReference type="NCBI Taxonomy" id="72657"/>
    <lineage>
        <taxon>Eukaryota</taxon>
        <taxon>Viridiplantae</taxon>
        <taxon>Streptophyta</taxon>
        <taxon>Embryophyta</taxon>
        <taxon>Tracheophyta</taxon>
        <taxon>Spermatophyta</taxon>
        <taxon>Magnoliopsida</taxon>
        <taxon>eudicotyledons</taxon>
        <taxon>Gunneridae</taxon>
        <taxon>Pentapetalae</taxon>
        <taxon>rosids</taxon>
        <taxon>malvids</taxon>
        <taxon>Brassicales</taxon>
        <taxon>Brassicaceae</taxon>
        <taxon>Aethionemeae</taxon>
        <taxon>Aethionema</taxon>
    </lineage>
</organism>
<sequence>MTIALGKYTKDEKDLFDIMDDWLRRDRFVFVGWSGLLLFPCAYFALGGWFTGTTFVTSWYTHGLASSYLEGCNFLTAAVSTPANSLAHSLLLLWGPEAQGDFTRWCQLGGLWTFVALHGAFALIGFMLRQFELARSVQLRPYNAIAFSGPIAVFVSVFLIYPLGQSGWFFAPSFGVAAIFRFILFFQGFHNWTLNPFHMMGVAGVLGAALLCAIHGATVENTLFEDGDGANTFRAFNPTQAEETYSMVTANRFWSQIFGVAFSNKRWLHFFMLFVPVTGLWMSALGVVGLALNLRAYDFVSQEIRAAEDPEFETFYTKNILLNEGIRAWMAAQDQPHENLIFPEEVLPRGNAL</sequence>
<keyword id="KW-0007">Acetylation</keyword>
<keyword id="KW-0148">Chlorophyll</keyword>
<keyword id="KW-0150">Chloroplast</keyword>
<keyword id="KW-0157">Chromophore</keyword>
<keyword id="KW-0249">Electron transport</keyword>
<keyword id="KW-0408">Iron</keyword>
<keyword id="KW-0460">Magnesium</keyword>
<keyword id="KW-0472">Membrane</keyword>
<keyword id="KW-0479">Metal-binding</keyword>
<keyword id="KW-0560">Oxidoreductase</keyword>
<keyword id="KW-0597">Phosphoprotein</keyword>
<keyword id="KW-0602">Photosynthesis</keyword>
<keyword id="KW-0604">Photosystem II</keyword>
<keyword id="KW-0934">Plastid</keyword>
<keyword id="KW-0793">Thylakoid</keyword>
<keyword id="KW-0812">Transmembrane</keyword>
<keyword id="KW-1133">Transmembrane helix</keyword>
<keyword id="KW-0813">Transport</keyword>
<reference key="1">
    <citation type="submission" date="2007-03" db="EMBL/GenBank/DDBJ databases">
        <title>Sequencing analysis of Aethionema grandiflorum chloroplast DNA.</title>
        <authorList>
            <person name="Hosouchi T."/>
            <person name="Tsuruoka H."/>
            <person name="Kotani H."/>
        </authorList>
    </citation>
    <scope>NUCLEOTIDE SEQUENCE [LARGE SCALE GENOMIC DNA]</scope>
</reference>
<accession>A4QJJ4</accession>
<feature type="initiator methionine" description="Removed" evidence="1">
    <location>
        <position position="1"/>
    </location>
</feature>
<feature type="chain" id="PRO_0000359618" description="Photosystem II D2 protein">
    <location>
        <begin position="2"/>
        <end position="353"/>
    </location>
</feature>
<feature type="transmembrane region" description="Helical" evidence="2">
    <location>
        <begin position="41"/>
        <end position="61"/>
    </location>
</feature>
<feature type="transmembrane region" description="Helical" evidence="2">
    <location>
        <begin position="125"/>
        <end position="141"/>
    </location>
</feature>
<feature type="transmembrane region" description="Helical" evidence="2">
    <location>
        <begin position="153"/>
        <end position="166"/>
    </location>
</feature>
<feature type="transmembrane region" description="Helical" evidence="2">
    <location>
        <begin position="208"/>
        <end position="228"/>
    </location>
</feature>
<feature type="transmembrane region" description="Helical" evidence="2">
    <location>
        <begin position="279"/>
        <end position="295"/>
    </location>
</feature>
<feature type="binding site" description="axial binding residue" evidence="2">
    <location>
        <position position="118"/>
    </location>
    <ligand>
        <name>chlorophyll a</name>
        <dbReference type="ChEBI" id="CHEBI:58416"/>
        <label>ChlzD2</label>
    </ligand>
    <ligandPart>
        <name>Mg</name>
        <dbReference type="ChEBI" id="CHEBI:25107"/>
    </ligandPart>
</feature>
<feature type="binding site" evidence="2">
    <location>
        <position position="130"/>
    </location>
    <ligand>
        <name>pheophytin a</name>
        <dbReference type="ChEBI" id="CHEBI:136840"/>
        <label>D2</label>
    </ligand>
</feature>
<feature type="binding site" evidence="2">
    <location>
        <position position="143"/>
    </location>
    <ligand>
        <name>pheophytin a</name>
        <dbReference type="ChEBI" id="CHEBI:136840"/>
        <label>D2</label>
    </ligand>
</feature>
<feature type="binding site" description="axial binding residue" evidence="2">
    <location>
        <position position="198"/>
    </location>
    <ligand>
        <name>chlorophyll a</name>
        <dbReference type="ChEBI" id="CHEBI:58416"/>
        <label>PD2</label>
    </ligand>
    <ligandPart>
        <name>Mg</name>
        <dbReference type="ChEBI" id="CHEBI:25107"/>
    </ligandPart>
</feature>
<feature type="binding site" evidence="2">
    <location>
        <position position="215"/>
    </location>
    <ligand>
        <name>a plastoquinone</name>
        <dbReference type="ChEBI" id="CHEBI:17757"/>
        <label>Q(A)</label>
    </ligand>
</feature>
<feature type="binding site" evidence="2">
    <location>
        <position position="215"/>
    </location>
    <ligand>
        <name>Fe cation</name>
        <dbReference type="ChEBI" id="CHEBI:24875"/>
        <note>ligand shared with heterodimeric partner</note>
    </ligand>
</feature>
<feature type="binding site" evidence="2">
    <location>
        <position position="262"/>
    </location>
    <ligand>
        <name>a plastoquinone</name>
        <dbReference type="ChEBI" id="CHEBI:17757"/>
        <label>Q(A)</label>
    </ligand>
</feature>
<feature type="binding site" evidence="2">
    <location>
        <position position="269"/>
    </location>
    <ligand>
        <name>Fe cation</name>
        <dbReference type="ChEBI" id="CHEBI:24875"/>
        <note>ligand shared with heterodimeric partner</note>
    </ligand>
</feature>
<feature type="modified residue" description="N-acetylthreonine" evidence="1">
    <location>
        <position position="2"/>
    </location>
</feature>
<feature type="modified residue" description="Phosphothreonine" evidence="1">
    <location>
        <position position="2"/>
    </location>
</feature>
<dbReference type="EC" id="1.10.3.9" evidence="2"/>
<dbReference type="EMBL" id="AP009367">
    <property type="protein sequence ID" value="BAF49849.1"/>
    <property type="molecule type" value="Genomic_DNA"/>
</dbReference>
<dbReference type="RefSeq" id="YP_001123025.1">
    <property type="nucleotide sequence ID" value="NC_009266.1"/>
</dbReference>
<dbReference type="SMR" id="A4QJJ4"/>
<dbReference type="GeneID" id="4962342"/>
<dbReference type="GO" id="GO:0009535">
    <property type="term" value="C:chloroplast thylakoid membrane"/>
    <property type="evidence" value="ECO:0007669"/>
    <property type="project" value="UniProtKB-SubCell"/>
</dbReference>
<dbReference type="GO" id="GO:0009523">
    <property type="term" value="C:photosystem II"/>
    <property type="evidence" value="ECO:0007669"/>
    <property type="project" value="UniProtKB-KW"/>
</dbReference>
<dbReference type="GO" id="GO:0016168">
    <property type="term" value="F:chlorophyll binding"/>
    <property type="evidence" value="ECO:0007669"/>
    <property type="project" value="UniProtKB-UniRule"/>
</dbReference>
<dbReference type="GO" id="GO:0045156">
    <property type="term" value="F:electron transporter, transferring electrons within the cyclic electron transport pathway of photosynthesis activity"/>
    <property type="evidence" value="ECO:0007669"/>
    <property type="project" value="InterPro"/>
</dbReference>
<dbReference type="GO" id="GO:0005506">
    <property type="term" value="F:iron ion binding"/>
    <property type="evidence" value="ECO:0007669"/>
    <property type="project" value="UniProtKB-UniRule"/>
</dbReference>
<dbReference type="GO" id="GO:0010242">
    <property type="term" value="F:oxygen evolving activity"/>
    <property type="evidence" value="ECO:0007669"/>
    <property type="project" value="UniProtKB-EC"/>
</dbReference>
<dbReference type="GO" id="GO:0009772">
    <property type="term" value="P:photosynthetic electron transport in photosystem II"/>
    <property type="evidence" value="ECO:0007669"/>
    <property type="project" value="InterPro"/>
</dbReference>
<dbReference type="CDD" id="cd09288">
    <property type="entry name" value="Photosystem-II_D2"/>
    <property type="match status" value="1"/>
</dbReference>
<dbReference type="FunFam" id="1.20.85.10:FF:000001">
    <property type="entry name" value="photosystem II D2 protein-like"/>
    <property type="match status" value="1"/>
</dbReference>
<dbReference type="Gene3D" id="1.20.85.10">
    <property type="entry name" value="Photosystem II protein D1-like"/>
    <property type="match status" value="1"/>
</dbReference>
<dbReference type="HAMAP" id="MF_01383">
    <property type="entry name" value="PSII_PsbD_D2"/>
    <property type="match status" value="1"/>
</dbReference>
<dbReference type="InterPro" id="IPR055266">
    <property type="entry name" value="D1/D2"/>
</dbReference>
<dbReference type="InterPro" id="IPR036854">
    <property type="entry name" value="Photo_II_D1/D2_sf"/>
</dbReference>
<dbReference type="InterPro" id="IPR000484">
    <property type="entry name" value="Photo_RC_L/M"/>
</dbReference>
<dbReference type="InterPro" id="IPR055265">
    <property type="entry name" value="Photo_RC_L/M_CS"/>
</dbReference>
<dbReference type="InterPro" id="IPR005868">
    <property type="entry name" value="PSII_PsbD/D2"/>
</dbReference>
<dbReference type="NCBIfam" id="TIGR01152">
    <property type="entry name" value="psbD"/>
    <property type="match status" value="1"/>
</dbReference>
<dbReference type="PANTHER" id="PTHR33149:SF57">
    <property type="entry name" value="PHOTOSYSTEM II D2 PROTEIN"/>
    <property type="match status" value="1"/>
</dbReference>
<dbReference type="PANTHER" id="PTHR33149">
    <property type="entry name" value="PHOTOSYSTEM II PROTEIN D1"/>
    <property type="match status" value="1"/>
</dbReference>
<dbReference type="Pfam" id="PF00124">
    <property type="entry name" value="Photo_RC"/>
    <property type="match status" value="1"/>
</dbReference>
<dbReference type="PRINTS" id="PR00256">
    <property type="entry name" value="REACTNCENTRE"/>
</dbReference>
<dbReference type="SUPFAM" id="SSF81483">
    <property type="entry name" value="Bacterial photosystem II reaction centre, L and M subunits"/>
    <property type="match status" value="1"/>
</dbReference>
<dbReference type="PROSITE" id="PS00244">
    <property type="entry name" value="REACTION_CENTER"/>
    <property type="match status" value="1"/>
</dbReference>
<protein>
    <recommendedName>
        <fullName evidence="2">Photosystem II D2 protein</fullName>
        <shortName evidence="2">PSII D2 protein</shortName>
        <ecNumber evidence="2">1.10.3.9</ecNumber>
    </recommendedName>
    <alternativeName>
        <fullName evidence="2">Photosystem Q(A) protein</fullName>
    </alternativeName>
</protein>
<comment type="function">
    <text evidence="2">Photosystem II (PSII) is a light-driven water:plastoquinone oxidoreductase that uses light energy to abstract electrons from H(2)O, generating O(2) and a proton gradient subsequently used for ATP formation. It consists of a core antenna complex that captures photons, and an electron transfer chain that converts photonic excitation into a charge separation. The D1/D2 (PsbA/PsbD) reaction center heterodimer binds P680, the primary electron donor of PSII as well as several subsequent electron acceptors. D2 is needed for assembly of a stable PSII complex.</text>
</comment>
<comment type="catalytic activity">
    <reaction evidence="2">
        <text>2 a plastoquinone + 4 hnu + 2 H2O = 2 a plastoquinol + O2</text>
        <dbReference type="Rhea" id="RHEA:36359"/>
        <dbReference type="Rhea" id="RHEA-COMP:9561"/>
        <dbReference type="Rhea" id="RHEA-COMP:9562"/>
        <dbReference type="ChEBI" id="CHEBI:15377"/>
        <dbReference type="ChEBI" id="CHEBI:15379"/>
        <dbReference type="ChEBI" id="CHEBI:17757"/>
        <dbReference type="ChEBI" id="CHEBI:30212"/>
        <dbReference type="ChEBI" id="CHEBI:62192"/>
        <dbReference type="EC" id="1.10.3.9"/>
    </reaction>
</comment>
<comment type="cofactor">
    <text evidence="2">The D1/D2 heterodimer binds P680, chlorophylls that are the primary electron donor of PSII, and subsequent electron acceptors. It shares a non-heme iron and each subunit binds pheophytin, quinone, additional chlorophylls, carotenoids and lipids. There is also a Cl(-1) ion associated with D1 and D2, which is required for oxygen evolution. The PSII complex binds additional chlorophylls, carotenoids and specific lipids.</text>
</comment>
<comment type="subunit">
    <text evidence="2">PSII is composed of 1 copy each of membrane proteins PsbA, PsbB, PsbC, PsbD, PsbE, PsbF, PsbH, PsbI, PsbJ, PsbK, PsbL, PsbM, PsbT, PsbX, PsbY, PsbZ, Psb30/Ycf12, at least 3 peripheral proteins of the oxygen-evolving complex and a large number of cofactors. It forms dimeric complexes.</text>
</comment>
<comment type="subcellular location">
    <subcellularLocation>
        <location evidence="2">Plastid</location>
        <location evidence="2">Chloroplast thylakoid membrane</location>
        <topology evidence="2">Multi-pass membrane protein</topology>
    </subcellularLocation>
</comment>
<comment type="miscellaneous">
    <text evidence="2">2 of the reaction center chlorophylls (ChlD1 and ChlD2) are entirely coordinated by water.</text>
</comment>
<comment type="similarity">
    <text evidence="2">Belongs to the reaction center PufL/M/PsbA/D family.</text>
</comment>
<name>PSBD_AETGR</name>
<geneLocation type="chloroplast"/>
<evidence type="ECO:0000250" key="1">
    <source>
        <dbReference type="UniProtKB" id="P56761"/>
    </source>
</evidence>
<evidence type="ECO:0000255" key="2">
    <source>
        <dbReference type="HAMAP-Rule" id="MF_01383"/>
    </source>
</evidence>